<comment type="function">
    <text evidence="1">This is one of the proteins that bind and probably mediate the attachment of the 5S RNA into the large ribosomal subunit, where it forms part of the central protuberance.</text>
</comment>
<comment type="subunit">
    <text evidence="1">Part of the 50S ribosomal subunit; part of the 5S rRNA/L5/L18/L25 subcomplex. Contacts the 5S and 23S rRNAs.</text>
</comment>
<comment type="similarity">
    <text evidence="1">Belongs to the universal ribosomal protein uL18 family.</text>
</comment>
<evidence type="ECO:0000255" key="1">
    <source>
        <dbReference type="HAMAP-Rule" id="MF_01337"/>
    </source>
</evidence>
<evidence type="ECO:0000305" key="2"/>
<sequence>MDKKASRIRRATRARRKIAELGATRLVVHRTPRHVYAQVIAANGSEVIAAASTVEKAIREQVKYTGNVDAAKAVGKAVAERALEKGVTAVAFDRSGFQYHGRVAALAESAREAGLKF</sequence>
<keyword id="KW-0687">Ribonucleoprotein</keyword>
<keyword id="KW-0689">Ribosomal protein</keyword>
<keyword id="KW-0694">RNA-binding</keyword>
<keyword id="KW-0699">rRNA-binding</keyword>
<reference key="1">
    <citation type="submission" date="2007-08" db="EMBL/GenBank/DDBJ databases">
        <authorList>
            <consortium name="The Vibrio harveyi Genome Sequencing Project"/>
            <person name="Bassler B."/>
            <person name="Clifton S.W."/>
            <person name="Fulton L."/>
            <person name="Delehaunty K."/>
            <person name="Fronick C."/>
            <person name="Harrison M."/>
            <person name="Markivic C."/>
            <person name="Fulton R."/>
            <person name="Tin-Wollam A.-M."/>
            <person name="Shah N."/>
            <person name="Pepin K."/>
            <person name="Nash W."/>
            <person name="Thiruvilangam P."/>
            <person name="Bhonagiri V."/>
            <person name="Waters C."/>
            <person name="Tu K.C."/>
            <person name="Irgon J."/>
            <person name="Wilson R.K."/>
        </authorList>
    </citation>
    <scope>NUCLEOTIDE SEQUENCE [LARGE SCALE GENOMIC DNA]</scope>
    <source>
        <strain>ATCC BAA-1116 / BB120</strain>
    </source>
</reference>
<feature type="chain" id="PRO_1000053137" description="Large ribosomal subunit protein uL18">
    <location>
        <begin position="1"/>
        <end position="117"/>
    </location>
</feature>
<gene>
    <name evidence="1" type="primary">rplR</name>
    <name type="ordered locus">VIBHAR_00746</name>
</gene>
<dbReference type="EMBL" id="CP000789">
    <property type="protein sequence ID" value="ABU69747.1"/>
    <property type="molecule type" value="Genomic_DNA"/>
</dbReference>
<dbReference type="RefSeq" id="WP_005435088.1">
    <property type="nucleotide sequence ID" value="NC_022269.1"/>
</dbReference>
<dbReference type="SMR" id="A7MWH4"/>
<dbReference type="GeneID" id="94023441"/>
<dbReference type="KEGG" id="vha:VIBHAR_00746"/>
<dbReference type="PATRIC" id="fig|338187.25.peg.1868"/>
<dbReference type="Proteomes" id="UP000008152">
    <property type="component" value="Chromosome I"/>
</dbReference>
<dbReference type="GO" id="GO:0022625">
    <property type="term" value="C:cytosolic large ribosomal subunit"/>
    <property type="evidence" value="ECO:0007669"/>
    <property type="project" value="TreeGrafter"/>
</dbReference>
<dbReference type="GO" id="GO:0008097">
    <property type="term" value="F:5S rRNA binding"/>
    <property type="evidence" value="ECO:0007669"/>
    <property type="project" value="TreeGrafter"/>
</dbReference>
<dbReference type="GO" id="GO:0003735">
    <property type="term" value="F:structural constituent of ribosome"/>
    <property type="evidence" value="ECO:0007669"/>
    <property type="project" value="InterPro"/>
</dbReference>
<dbReference type="GO" id="GO:0006412">
    <property type="term" value="P:translation"/>
    <property type="evidence" value="ECO:0007669"/>
    <property type="project" value="UniProtKB-UniRule"/>
</dbReference>
<dbReference type="CDD" id="cd00432">
    <property type="entry name" value="Ribosomal_L18_L5e"/>
    <property type="match status" value="1"/>
</dbReference>
<dbReference type="FunFam" id="3.30.420.100:FF:000001">
    <property type="entry name" value="50S ribosomal protein L18"/>
    <property type="match status" value="1"/>
</dbReference>
<dbReference type="Gene3D" id="3.30.420.100">
    <property type="match status" value="1"/>
</dbReference>
<dbReference type="HAMAP" id="MF_01337_B">
    <property type="entry name" value="Ribosomal_uL18_B"/>
    <property type="match status" value="1"/>
</dbReference>
<dbReference type="InterPro" id="IPR004389">
    <property type="entry name" value="Ribosomal_uL18_bac-type"/>
</dbReference>
<dbReference type="InterPro" id="IPR005484">
    <property type="entry name" value="Ribosomal_uL18_bac/euk"/>
</dbReference>
<dbReference type="NCBIfam" id="TIGR00060">
    <property type="entry name" value="L18_bact"/>
    <property type="match status" value="1"/>
</dbReference>
<dbReference type="PANTHER" id="PTHR12899">
    <property type="entry name" value="39S RIBOSOMAL PROTEIN L18, MITOCHONDRIAL"/>
    <property type="match status" value="1"/>
</dbReference>
<dbReference type="PANTHER" id="PTHR12899:SF3">
    <property type="entry name" value="LARGE RIBOSOMAL SUBUNIT PROTEIN UL18M"/>
    <property type="match status" value="1"/>
</dbReference>
<dbReference type="Pfam" id="PF00861">
    <property type="entry name" value="Ribosomal_L18p"/>
    <property type="match status" value="1"/>
</dbReference>
<dbReference type="SUPFAM" id="SSF53137">
    <property type="entry name" value="Translational machinery components"/>
    <property type="match status" value="1"/>
</dbReference>
<protein>
    <recommendedName>
        <fullName evidence="1">Large ribosomal subunit protein uL18</fullName>
    </recommendedName>
    <alternativeName>
        <fullName evidence="2">50S ribosomal protein L18</fullName>
    </alternativeName>
</protein>
<accession>A7MWH4</accession>
<proteinExistence type="inferred from homology"/>
<name>RL18_VIBC1</name>
<organism>
    <name type="scientific">Vibrio campbellii (strain ATCC BAA-1116)</name>
    <dbReference type="NCBI Taxonomy" id="2902295"/>
    <lineage>
        <taxon>Bacteria</taxon>
        <taxon>Pseudomonadati</taxon>
        <taxon>Pseudomonadota</taxon>
        <taxon>Gammaproteobacteria</taxon>
        <taxon>Vibrionales</taxon>
        <taxon>Vibrionaceae</taxon>
        <taxon>Vibrio</taxon>
    </lineage>
</organism>